<comment type="function">
    <text evidence="3 7 10 11 14">A light-sensitive calcium channel that is required for inositide-mediated Ca(2+) entry in the retina during phospholipase C (PLC)-mediated phototransduction. Ca(2+) influx may then feed back and inhibit PLC, thereby facilitating phosphatidylinositol 4,5 bisphosphate (PIP2) recycling. Trp and trpl act together in the light response, though it is unclear whether as heteromultimers or as distinct units, and are activated by fatty acids and metabolic stress. Also required for olfactory adaptation and may be involved in olfactory system development.</text>
</comment>
<comment type="subunit">
    <text evidence="6 8 12 13">The C-terminus interacts with a PDZ domain of inaD to form the core of the inaD signaling complex. Other members of the complex include norpA (PLC), inaC (PKC), and possibly trpl, ninaC, Fkbp59, calmodulin and rhodopsin. Forms homomultimers and heteromultimers with trpl. Interaction with trpl is mediated in part by the N-terminal region and the transmembrane domains. Also interacts, though to a lower extent, with Trpgamma.</text>
</comment>
<comment type="interaction">
    <interactant intactId="EBI-165136">
        <id>P19334</id>
    </interactant>
    <interactant intactId="EBI-195326">
        <id>Q24008</id>
        <label>inaD</label>
    </interactant>
    <organismsDiffer>false</organismsDiffer>
    <experiments>10</experiments>
</comment>
<comment type="subcellular location">
    <subcellularLocation>
        <location evidence="16 17 18 19">Cell membrane</location>
        <topology evidence="16 17 18 19">Multi-pass membrane protein</topology>
    </subcellularLocation>
    <subcellularLocation>
        <location evidence="16 17 18 19">Cell projection</location>
        <location evidence="16 17 18 19">Rhabdomere membrane</location>
        <topology evidence="16 17 18 19">Multi-pass membrane protein</topology>
    </subcellularLocation>
    <text>Localized on plasma membrane loops found at the base of the rhabdomere, in close proximity to the calcium stores.</text>
</comment>
<comment type="tissue specificity">
    <text evidence="3 4 8 11">Expressed predominantly in the rhabdomeres of photoreceptor cells. Expressed in the third antennal segment and in the olfactory segment at approximately 70 hours after puparium formation during antennal development.</text>
</comment>
<comment type="PTM">
    <text evidence="5">Phosphorylated by inaC.</text>
</comment>
<comment type="similarity">
    <text evidence="15">Belongs to the transient receptor (TC 1.A.4) family. STrpC subfamily.</text>
</comment>
<comment type="sequence caution" evidence="15">
    <conflict type="frameshift">
        <sequence resource="EMBL-CDS" id="AAQ22416"/>
    </conflict>
</comment>
<sequence length="1275" mass="142594">MGSNTESDAEKALGSRLDYDLMMAEEYILSDVEKNFILSCERGDLPGVKKILEEYQGTDKFNINCTDPMNRSALISAIENENFDLMVILLEHNIEVGDALLHAISEEYVEAVEELLQWEETNHKEGQPYSWEAVDRSKSTFTVDITPLILAAHRNNYEILKILLDRGATLPMPHDVKCGCDECVTSQMTDSLRHSQSRINAYRALSASSLIALSSRDPVLTAFQLSWELKRLQAMESEFRAEYTEMRQMVQDFGTSLLDHARTSMELEVMLNFNHEPSHDIWCLGQRQTLERLKLAIRYKQKTFVAHPNVQQLLAAIWYDGLPGFRRKQASQQLMDVVKLGCSFPIYSLKYILAPDSEGAKFMRKPFVKFITHSCSYMFFLMLLGAASLRVVQITFELLAFPWMLTMLEDWRKHERGSLPGPIELAIITYIMALIFEELKSLYSDGLFEYIMDLWNIVDYISNMFYVTWILCRATAWVIVHRDLWFRGIDPYFPREHWHPFDPMLLSEGAFAAGMVFSYLKLVHIFSINPHLGPLQVSLGRMIIDIIKFFFIYTLVLFAFGCGLNQLLWYYAELEKNKCYHLHPDVADFDDQEKACTIWRRFSNLFETSQSLFWASFGLVDLVSFDLAGIKSFTRFWALLMFGSYSVINIIVLLNMLIAMMSNSYQIISERADTEWKFARSQLWMSYFEDGGTIPPPFNLCPNMKMLRKTLGRKRPSRTKSFMRKSMERAQTLHDKVMKLLVRRYITAEQRRRDDYGITEDDIIEVRQDISSLRFELLEIFTNNNWDVPDIEKKSQGVARTTKGKVMERRILKDFQIGFVENLKQEMSESESGRDIFSSLAKVIGRKKTQKGDKDWNAIARKNTFASDPIGSKRSSMQRHSQRSLRRKIIEQANEGLQMNQTQLIEFNPNLGDVTRATRVAYVKFMRKKMAADEVSLADDEGAPNGEGEKKPLDASGSKKSITSGGTGGGASMLAAAALRASVKNVDEKSGADGKPGTMGKPTDDKKAGDDKDKQQPPKDSKPSAGGPKPGDQKPTPGAGAPKPQAAGTISKPGESQKKDAPAPPTKPGDTKPAAPKPGESAKPEAAAKKEESSKTEASKPAATNGAAKSAAPSAPSDAKPDSKLKPGAAGAPEATKATNGASKPDEKKSGPEEPKKAAGDSKPGDDAKDKDKKPGDDKDKKPGDDKDKKPADNNDKKPADDKDKKPGDDKDKKPGDDKDKKPSDDKDKKPADDKDKKPAAAPLKPAIKVGQSSAAAGGERGKSTVTGRMISGWL</sequence>
<gene>
    <name type="primary">trp</name>
    <name type="ORF">CG7875</name>
</gene>
<reference key="1">
    <citation type="journal article" date="1989" name="Neuron">
        <title>Molecular characterization of the Drosophila trp locus: a putative integral membrane protein required for phototransduction.</title>
        <authorList>
            <person name="Montell C."/>
            <person name="Rubin G.M."/>
        </authorList>
    </citation>
    <scope>NUCLEOTIDE SEQUENCE [GENOMIC DNA]</scope>
    <scope>FUNCTION</scope>
    <scope>SUBCELLULAR LOCATION</scope>
    <scope>TISSUE SPECIFICITY</scope>
    <source>
        <strain>Oregon-R</strain>
    </source>
</reference>
<reference key="2">
    <citation type="journal article" date="1989" name="Neuron">
        <title>Proper function of the Drosophila trp gene product during pupal development is important for normal visual transduction in the adult.</title>
        <authorList>
            <person name="Wong F."/>
            <person name="Schaefer E.L."/>
            <person name="Roop B.C."/>
            <person name="Lamendola J.N."/>
            <person name="Johnson-Seaton D."/>
            <person name="Shao D."/>
        </authorList>
    </citation>
    <scope>NUCLEOTIDE SEQUENCE [GENOMIC DNA]</scope>
    <scope>FUNCTION</scope>
</reference>
<reference key="3">
    <citation type="journal article" date="2000" name="Science">
        <title>The genome sequence of Drosophila melanogaster.</title>
        <authorList>
            <person name="Adams M.D."/>
            <person name="Celniker S.E."/>
            <person name="Holt R.A."/>
            <person name="Evans C.A."/>
            <person name="Gocayne J.D."/>
            <person name="Amanatides P.G."/>
            <person name="Scherer S.E."/>
            <person name="Li P.W."/>
            <person name="Hoskins R.A."/>
            <person name="Galle R.F."/>
            <person name="George R.A."/>
            <person name="Lewis S.E."/>
            <person name="Richards S."/>
            <person name="Ashburner M."/>
            <person name="Henderson S.N."/>
            <person name="Sutton G.G."/>
            <person name="Wortman J.R."/>
            <person name="Yandell M.D."/>
            <person name="Zhang Q."/>
            <person name="Chen L.X."/>
            <person name="Brandon R.C."/>
            <person name="Rogers Y.-H.C."/>
            <person name="Blazej R.G."/>
            <person name="Champe M."/>
            <person name="Pfeiffer B.D."/>
            <person name="Wan K.H."/>
            <person name="Doyle C."/>
            <person name="Baxter E.G."/>
            <person name="Helt G."/>
            <person name="Nelson C.R."/>
            <person name="Miklos G.L.G."/>
            <person name="Abril J.F."/>
            <person name="Agbayani A."/>
            <person name="An H.-J."/>
            <person name="Andrews-Pfannkoch C."/>
            <person name="Baldwin D."/>
            <person name="Ballew R.M."/>
            <person name="Basu A."/>
            <person name="Baxendale J."/>
            <person name="Bayraktaroglu L."/>
            <person name="Beasley E.M."/>
            <person name="Beeson K.Y."/>
            <person name="Benos P.V."/>
            <person name="Berman B.P."/>
            <person name="Bhandari D."/>
            <person name="Bolshakov S."/>
            <person name="Borkova D."/>
            <person name="Botchan M.R."/>
            <person name="Bouck J."/>
            <person name="Brokstein P."/>
            <person name="Brottier P."/>
            <person name="Burtis K.C."/>
            <person name="Busam D.A."/>
            <person name="Butler H."/>
            <person name="Cadieu E."/>
            <person name="Center A."/>
            <person name="Chandra I."/>
            <person name="Cherry J.M."/>
            <person name="Cawley S."/>
            <person name="Dahlke C."/>
            <person name="Davenport L.B."/>
            <person name="Davies P."/>
            <person name="de Pablos B."/>
            <person name="Delcher A."/>
            <person name="Deng Z."/>
            <person name="Mays A.D."/>
            <person name="Dew I."/>
            <person name="Dietz S.M."/>
            <person name="Dodson K."/>
            <person name="Doup L.E."/>
            <person name="Downes M."/>
            <person name="Dugan-Rocha S."/>
            <person name="Dunkov B.C."/>
            <person name="Dunn P."/>
            <person name="Durbin K.J."/>
            <person name="Evangelista C.C."/>
            <person name="Ferraz C."/>
            <person name="Ferriera S."/>
            <person name="Fleischmann W."/>
            <person name="Fosler C."/>
            <person name="Gabrielian A.E."/>
            <person name="Garg N.S."/>
            <person name="Gelbart W.M."/>
            <person name="Glasser K."/>
            <person name="Glodek A."/>
            <person name="Gong F."/>
            <person name="Gorrell J.H."/>
            <person name="Gu Z."/>
            <person name="Guan P."/>
            <person name="Harris M."/>
            <person name="Harris N.L."/>
            <person name="Harvey D.A."/>
            <person name="Heiman T.J."/>
            <person name="Hernandez J.R."/>
            <person name="Houck J."/>
            <person name="Hostin D."/>
            <person name="Houston K.A."/>
            <person name="Howland T.J."/>
            <person name="Wei M.-H."/>
            <person name="Ibegwam C."/>
            <person name="Jalali M."/>
            <person name="Kalush F."/>
            <person name="Karpen G.H."/>
            <person name="Ke Z."/>
            <person name="Kennison J.A."/>
            <person name="Ketchum K.A."/>
            <person name="Kimmel B.E."/>
            <person name="Kodira C.D."/>
            <person name="Kraft C.L."/>
            <person name="Kravitz S."/>
            <person name="Kulp D."/>
            <person name="Lai Z."/>
            <person name="Lasko P."/>
            <person name="Lei Y."/>
            <person name="Levitsky A.A."/>
            <person name="Li J.H."/>
            <person name="Li Z."/>
            <person name="Liang Y."/>
            <person name="Lin X."/>
            <person name="Liu X."/>
            <person name="Mattei B."/>
            <person name="McIntosh T.C."/>
            <person name="McLeod M.P."/>
            <person name="McPherson D."/>
            <person name="Merkulov G."/>
            <person name="Milshina N.V."/>
            <person name="Mobarry C."/>
            <person name="Morris J."/>
            <person name="Moshrefi A."/>
            <person name="Mount S.M."/>
            <person name="Moy M."/>
            <person name="Murphy B."/>
            <person name="Murphy L."/>
            <person name="Muzny D.M."/>
            <person name="Nelson D.L."/>
            <person name="Nelson D.R."/>
            <person name="Nelson K.A."/>
            <person name="Nixon K."/>
            <person name="Nusskern D.R."/>
            <person name="Pacleb J.M."/>
            <person name="Palazzolo M."/>
            <person name="Pittman G.S."/>
            <person name="Pan S."/>
            <person name="Pollard J."/>
            <person name="Puri V."/>
            <person name="Reese M.G."/>
            <person name="Reinert K."/>
            <person name="Remington K."/>
            <person name="Saunders R.D.C."/>
            <person name="Scheeler F."/>
            <person name="Shen H."/>
            <person name="Shue B.C."/>
            <person name="Siden-Kiamos I."/>
            <person name="Simpson M."/>
            <person name="Skupski M.P."/>
            <person name="Smith T.J."/>
            <person name="Spier E."/>
            <person name="Spradling A.C."/>
            <person name="Stapleton M."/>
            <person name="Strong R."/>
            <person name="Sun E."/>
            <person name="Svirskas R."/>
            <person name="Tector C."/>
            <person name="Turner R."/>
            <person name="Venter E."/>
            <person name="Wang A.H."/>
            <person name="Wang X."/>
            <person name="Wang Z.-Y."/>
            <person name="Wassarman D.A."/>
            <person name="Weinstock G.M."/>
            <person name="Weissenbach J."/>
            <person name="Williams S.M."/>
            <person name="Woodage T."/>
            <person name="Worley K.C."/>
            <person name="Wu D."/>
            <person name="Yang S."/>
            <person name="Yao Q.A."/>
            <person name="Ye J."/>
            <person name="Yeh R.-F."/>
            <person name="Zaveri J.S."/>
            <person name="Zhan M."/>
            <person name="Zhang G."/>
            <person name="Zhao Q."/>
            <person name="Zheng L."/>
            <person name="Zheng X.H."/>
            <person name="Zhong F.N."/>
            <person name="Zhong W."/>
            <person name="Zhou X."/>
            <person name="Zhu S.C."/>
            <person name="Zhu X."/>
            <person name="Smith H.O."/>
            <person name="Gibbs R.A."/>
            <person name="Myers E.W."/>
            <person name="Rubin G.M."/>
            <person name="Venter J.C."/>
        </authorList>
    </citation>
    <scope>NUCLEOTIDE SEQUENCE [LARGE SCALE GENOMIC DNA]</scope>
    <source>
        <strain>Berkeley</strain>
    </source>
</reference>
<reference key="4">
    <citation type="journal article" date="2002" name="Genome Biol.">
        <title>Annotation of the Drosophila melanogaster euchromatic genome: a systematic review.</title>
        <authorList>
            <person name="Misra S."/>
            <person name="Crosby M.A."/>
            <person name="Mungall C.J."/>
            <person name="Matthews B.B."/>
            <person name="Campbell K.S."/>
            <person name="Hradecky P."/>
            <person name="Huang Y."/>
            <person name="Kaminker J.S."/>
            <person name="Millburn G.H."/>
            <person name="Prochnik S.E."/>
            <person name="Smith C.D."/>
            <person name="Tupy J.L."/>
            <person name="Whitfield E.J."/>
            <person name="Bayraktaroglu L."/>
            <person name="Berman B.P."/>
            <person name="Bettencourt B.R."/>
            <person name="Celniker S.E."/>
            <person name="de Grey A.D.N.J."/>
            <person name="Drysdale R.A."/>
            <person name="Harris N.L."/>
            <person name="Richter J."/>
            <person name="Russo S."/>
            <person name="Schroeder A.J."/>
            <person name="Shu S.Q."/>
            <person name="Stapleton M."/>
            <person name="Yamada C."/>
            <person name="Ashburner M."/>
            <person name="Gelbart W.M."/>
            <person name="Rubin G.M."/>
            <person name="Lewis S.E."/>
        </authorList>
    </citation>
    <scope>GENOME REANNOTATION</scope>
    <source>
        <strain>Berkeley</strain>
    </source>
</reference>
<reference key="5">
    <citation type="submission" date="2003-08" db="EMBL/GenBank/DDBJ databases">
        <authorList>
            <person name="Stapleton M."/>
            <person name="Brokstein P."/>
            <person name="Hong L."/>
            <person name="Agbayani A."/>
            <person name="Carlson J.W."/>
            <person name="Champe M."/>
            <person name="Chavez C."/>
            <person name="Dorsett V."/>
            <person name="Dresnek D."/>
            <person name="Farfan D."/>
            <person name="Frise E."/>
            <person name="George R.A."/>
            <person name="Gonzalez M."/>
            <person name="Guarin H."/>
            <person name="Kronmiller B."/>
            <person name="Li P.W."/>
            <person name="Liao G."/>
            <person name="Miranda A."/>
            <person name="Mungall C.J."/>
            <person name="Nunoo J."/>
            <person name="Pacleb J.M."/>
            <person name="Paragas V."/>
            <person name="Park S."/>
            <person name="Patel S."/>
            <person name="Phouanenavong S."/>
            <person name="Wan K.H."/>
            <person name="Yu C."/>
            <person name="Lewis S.E."/>
            <person name="Rubin G.M."/>
            <person name="Celniker S.E."/>
        </authorList>
    </citation>
    <scope>NUCLEOTIDE SEQUENCE [LARGE SCALE MRNA]</scope>
    <source>
        <strain>Berkeley</strain>
        <tissue>Embryo</tissue>
    </source>
</reference>
<reference key="6">
    <citation type="journal article" date="1987" name="Somat. Cell Mol. Genet.">
        <title>Overlapping transcription units in the transient receptor potential locus of Drosophila melanogaster.</title>
        <authorList>
            <person name="Wong F."/>
            <person name="Yuh Z.T."/>
            <person name="Schaefer E.L."/>
            <person name="Roop B.C."/>
            <person name="Ally A.H."/>
        </authorList>
    </citation>
    <scope>NUCLEOTIDE SEQUENCE [GENOMIC DNA] OF 1126-1275</scope>
</reference>
<reference key="7">
    <citation type="journal article" date="1995" name="J. Neurosci.">
        <title>TRP, a protein essential for inositide-mediated Ca2+ influx is localized adjacent to the calcium stores in Drosophila photoreceptors.</title>
        <authorList>
            <person name="Pollock J.A."/>
            <person name="Assaf A."/>
            <person name="Peretz A."/>
            <person name="Nichols C.D."/>
            <person name="Mojet M.H."/>
            <person name="Hardie R.C."/>
            <person name="Minke B."/>
        </authorList>
    </citation>
    <scope>SUBCELLULAR LOCATION</scope>
</reference>
<reference key="8">
    <citation type="journal article" date="1997" name="Cell">
        <title>Coassembly of TRP and TRPL produces a distinct store-operated conductance.</title>
        <authorList>
            <person name="Xu X.-Z.S."/>
            <person name="Li H.-S."/>
            <person name="Guggino W.B."/>
            <person name="Montell C."/>
        </authorList>
    </citation>
    <scope>HOMOMULTIMERIZATION</scope>
    <scope>INTERACTION WITH TRPL</scope>
</reference>
<reference key="9">
    <citation type="journal article" date="1997" name="Neuron">
        <title>Requirement for the PDZ domain protein, INAD, for localization of the TRP store-operated channel to a signaling complex.</title>
        <authorList>
            <person name="Chevesich J."/>
            <person name="Kreuz A.J."/>
            <person name="Montell C."/>
        </authorList>
    </citation>
    <scope>SUBCELLULAR LOCATION</scope>
    <scope>IDENTIFICATION IN A COMPLEX WITH INAD; NORPA; RHODOPSIN AND CALMODULIN</scope>
</reference>
<reference key="10">
    <citation type="journal article" date="1999" name="J. Neurosci.">
        <title>Olfactory adaptation depends on the Trp Ca2+ channel in Drosophila.</title>
        <authorList>
            <person name="Stortkuhl K.F."/>
            <person name="Hovemann B.T."/>
            <person name="Carlson J.R."/>
        </authorList>
    </citation>
    <scope>FUNCTION</scope>
    <scope>TISSUE SPECIFICITY</scope>
</reference>
<reference key="11">
    <citation type="journal article" date="1999" name="Nature">
        <title>Polyunsaturated fatty acids activate the Drosophila light-sensitive channels TRP and TRPL.</title>
        <authorList>
            <person name="Chyb S."/>
            <person name="Raghu P."/>
            <person name="Hardie R.C."/>
        </authorList>
    </citation>
    <scope>FUNCTION</scope>
</reference>
<reference key="12">
    <citation type="journal article" date="2000" name="J. Biol. Chem.">
        <title>Reversible phosphorylation of the signal transduction complex in Drosophila photoreceptors.</title>
        <authorList>
            <person name="Liu M."/>
            <person name="Parker L.L."/>
            <person name="Wadzinski B.E."/>
            <person name="Shieh B.-H."/>
        </authorList>
    </citation>
    <scope>PHOSPHORYLATION</scope>
</reference>
<reference key="13">
    <citation type="journal article" date="2000" name="J. Cell Biol.">
        <title>TRP and the PDZ protein, INAD, form the core complex required for retention of the signalplex in Drosophila photoreceptor cells.</title>
        <authorList>
            <person name="Li H.-S."/>
            <person name="Montell C."/>
        </authorList>
    </citation>
    <scope>INTERACTION WITH INAD</scope>
    <scope>SUBCELLULAR LOCATION</scope>
    <scope>TISSUE SPECIFICITY</scope>
    <scope>MUTAGENESIS OF VAL-1266</scope>
</reference>
<reference key="14">
    <citation type="journal article" date="2000" name="J. Neurosci.">
        <title>Novel mechanism of massive photoreceptor degeneration caused by mutations in the trp gene of Drosophila.</title>
        <authorList>
            <person name="Yoon J."/>
            <person name="Ben-Ami H.C."/>
            <person name="Hong Y.S."/>
            <person name="Park S."/>
            <person name="Strong L.L.R."/>
            <person name="Bowman J.D."/>
            <person name="Geng C."/>
            <person name="Baek K."/>
            <person name="Minke B."/>
            <person name="Pak W.L."/>
        </authorList>
    </citation>
    <scope>TISSUE SPECIFICITY</scope>
    <scope>MUTAGENESIS OF PRO-500; HIS-531; PHE-550 AND SER-867</scope>
</reference>
<reference key="15">
    <citation type="journal article" date="2000" name="J. Neurosci.">
        <title>Metabolic stress reversibly activates the Drosophila light-sensitive channels TRP and TRPL in vivo.</title>
        <authorList>
            <person name="Agam K."/>
            <person name="von Campenhausen M."/>
            <person name="Levy S."/>
            <person name="Ben-Ami H.C."/>
            <person name="Cook B."/>
            <person name="Kirschfeld K."/>
            <person name="Minke B."/>
        </authorList>
    </citation>
    <scope>FUNCTION</scope>
</reference>
<reference key="16">
    <citation type="journal article" date="2000" name="Neuron">
        <title>TRPgamma, a Drosophila TRP-related subunit, forms a regulated cation channel with TRPL.</title>
        <authorList>
            <person name="Xu X.-Z.S."/>
            <person name="Chien F."/>
            <person name="Butler A."/>
            <person name="Salkoff L."/>
            <person name="Montell C."/>
        </authorList>
    </citation>
    <scope>INTERACTION WITH TRPGAMMA</scope>
</reference>
<reference key="17">
    <citation type="journal article" date="2002" name="J. Biol. Chem.">
        <title>Single amino acid change in the fifth transmembrane segment of the TRP Ca2+ channel causes massive degeneration of photoreceptors.</title>
        <authorList>
            <person name="Hong Y.S."/>
            <person name="Park S."/>
            <person name="Geng C."/>
            <person name="Baek K."/>
            <person name="Bowman J.D."/>
            <person name="Yoon J."/>
            <person name="Pak W.L."/>
        </authorList>
    </citation>
    <scope>MUTAGENESIS OF PRO-500; HIS-531; PHE-550 AND SER-867</scope>
</reference>
<reference key="18">
    <citation type="journal article" date="2001" name="J. Exp. Biol.">
        <title>Phototransduction in Drosophila melanogaster.</title>
        <authorList>
            <person name="Hardie R.C."/>
        </authorList>
    </citation>
    <scope>REVIEW</scope>
</reference>
<proteinExistence type="evidence at protein level"/>
<organism>
    <name type="scientific">Drosophila melanogaster</name>
    <name type="common">Fruit fly</name>
    <dbReference type="NCBI Taxonomy" id="7227"/>
    <lineage>
        <taxon>Eukaryota</taxon>
        <taxon>Metazoa</taxon>
        <taxon>Ecdysozoa</taxon>
        <taxon>Arthropoda</taxon>
        <taxon>Hexapoda</taxon>
        <taxon>Insecta</taxon>
        <taxon>Pterygota</taxon>
        <taxon>Neoptera</taxon>
        <taxon>Endopterygota</taxon>
        <taxon>Diptera</taxon>
        <taxon>Brachycera</taxon>
        <taxon>Muscomorpha</taxon>
        <taxon>Ephydroidea</taxon>
        <taxon>Drosophilidae</taxon>
        <taxon>Drosophila</taxon>
        <taxon>Sophophora</taxon>
    </lineage>
</organism>
<keyword id="KW-0002">3D-structure</keyword>
<keyword id="KW-0040">ANK repeat</keyword>
<keyword id="KW-0106">Calcium</keyword>
<keyword id="KW-0107">Calcium channel</keyword>
<keyword id="KW-0109">Calcium transport</keyword>
<keyword id="KW-0112">Calmodulin-binding</keyword>
<keyword id="KW-1003">Cell membrane</keyword>
<keyword id="KW-0966">Cell projection</keyword>
<keyword id="KW-0407">Ion channel</keyword>
<keyword id="KW-0406">Ion transport</keyword>
<keyword id="KW-0472">Membrane</keyword>
<keyword id="KW-0552">Olfaction</keyword>
<keyword id="KW-1185">Reference proteome</keyword>
<keyword id="KW-0677">Repeat</keyword>
<keyword id="KW-0716">Sensory transduction</keyword>
<keyword id="KW-0812">Transmembrane</keyword>
<keyword id="KW-1133">Transmembrane helix</keyword>
<keyword id="KW-0813">Transport</keyword>
<keyword id="KW-0844">Vision</keyword>
<dbReference type="EMBL" id="M34394">
    <property type="protein sequence ID" value="AAA28976.1"/>
    <property type="molecule type" value="Genomic_DNA"/>
</dbReference>
<dbReference type="EMBL" id="M21306">
    <property type="protein sequence ID" value="AAA56928.1"/>
    <property type="molecule type" value="Genomic_DNA"/>
</dbReference>
<dbReference type="EMBL" id="AE014297">
    <property type="protein sequence ID" value="AAF56970.1"/>
    <property type="molecule type" value="Genomic_DNA"/>
</dbReference>
<dbReference type="EMBL" id="BT009947">
    <property type="protein sequence ID" value="AAQ22416.1"/>
    <property type="status" value="ALT_FRAME"/>
    <property type="molecule type" value="mRNA"/>
</dbReference>
<dbReference type="EMBL" id="M18634">
    <property type="protein sequence ID" value="AAA28977.1"/>
    <property type="molecule type" value="Genomic_DNA"/>
</dbReference>
<dbReference type="PIR" id="JN0015">
    <property type="entry name" value="JN0015"/>
</dbReference>
<dbReference type="PIR" id="JU0092">
    <property type="entry name" value="JU0092"/>
</dbReference>
<dbReference type="RefSeq" id="NP_476768.1">
    <property type="nucleotide sequence ID" value="NM_057420.4"/>
</dbReference>
<dbReference type="PDB" id="5F67">
    <property type="method" value="X-ray"/>
    <property type="resolution" value="1.76 A"/>
    <property type="chains" value="C/D=1259-1275"/>
</dbReference>
<dbReference type="PDB" id="7CQH">
    <property type="method" value="X-ray"/>
    <property type="resolution" value="2.15 A"/>
    <property type="chains" value="A=899-940"/>
</dbReference>
<dbReference type="PDB" id="7CQV">
    <property type="method" value="X-ray"/>
    <property type="resolution" value="1.78 A"/>
    <property type="chains" value="B=783-862"/>
</dbReference>
<dbReference type="PDBsum" id="5F67"/>
<dbReference type="PDBsum" id="7CQH"/>
<dbReference type="PDBsum" id="7CQV"/>
<dbReference type="SMR" id="P19334"/>
<dbReference type="BioGRID" id="68399">
    <property type="interactions" value="27"/>
</dbReference>
<dbReference type="FunCoup" id="P19334">
    <property type="interactions" value="39"/>
</dbReference>
<dbReference type="IntAct" id="P19334">
    <property type="interactions" value="6"/>
</dbReference>
<dbReference type="STRING" id="7227.FBpp0084879"/>
<dbReference type="TCDB" id="1.A.4.1.1">
    <property type="family name" value="the transient receptor potential ca2+/cation channel (trp-cc) family"/>
</dbReference>
<dbReference type="PaxDb" id="7227-FBpp0084879"/>
<dbReference type="EnsemblMetazoa" id="FBtr0085513">
    <property type="protein sequence ID" value="FBpp0084879"/>
    <property type="gene ID" value="FBgn0003861"/>
</dbReference>
<dbReference type="GeneID" id="43542"/>
<dbReference type="KEGG" id="dme:Dmel_CG7875"/>
<dbReference type="AGR" id="FB:FBgn0003861"/>
<dbReference type="CTD" id="43542"/>
<dbReference type="FlyBase" id="FBgn0003861">
    <property type="gene designation" value="trp"/>
</dbReference>
<dbReference type="VEuPathDB" id="VectorBase:FBgn0003861"/>
<dbReference type="eggNOG" id="KOG3609">
    <property type="taxonomic scope" value="Eukaryota"/>
</dbReference>
<dbReference type="HOGENOM" id="CLU_005716_0_0_1"/>
<dbReference type="InParanoid" id="P19334"/>
<dbReference type="OMA" id="NEGLQMD"/>
<dbReference type="OrthoDB" id="2373987at2759"/>
<dbReference type="PhylomeDB" id="P19334"/>
<dbReference type="Reactome" id="R-DME-3295583">
    <property type="pathway name" value="TRP channels"/>
</dbReference>
<dbReference type="Reactome" id="R-DME-5578775">
    <property type="pathway name" value="Ion homeostasis"/>
</dbReference>
<dbReference type="Reactome" id="R-DME-983695">
    <property type="pathway name" value="Antigen activates B Cell Receptor (BCR) leading to generation of second messengers"/>
</dbReference>
<dbReference type="BioGRID-ORCS" id="43542">
    <property type="hits" value="0 hits in 3 CRISPR screens"/>
</dbReference>
<dbReference type="ChiTaRS" id="trp">
    <property type="organism name" value="fly"/>
</dbReference>
<dbReference type="GenomeRNAi" id="43542"/>
<dbReference type="PRO" id="PR:P19334"/>
<dbReference type="Proteomes" id="UP000000803">
    <property type="component" value="Chromosome 3R"/>
</dbReference>
<dbReference type="Bgee" id="FBgn0003861">
    <property type="expression patterns" value="Expressed in outer photoreceptor cell (Drosophila) in insect head and 68 other cell types or tissues"/>
</dbReference>
<dbReference type="ExpressionAtlas" id="P19334">
    <property type="expression patterns" value="baseline and differential"/>
</dbReference>
<dbReference type="GO" id="GO:0034703">
    <property type="term" value="C:cation channel complex"/>
    <property type="evidence" value="ECO:0000353"/>
    <property type="project" value="FlyBase"/>
</dbReference>
<dbReference type="GO" id="GO:0016027">
    <property type="term" value="C:inaD signaling complex"/>
    <property type="evidence" value="ECO:0000353"/>
    <property type="project" value="UniProtKB"/>
</dbReference>
<dbReference type="GO" id="GO:0016020">
    <property type="term" value="C:membrane"/>
    <property type="evidence" value="ECO:0000303"/>
    <property type="project" value="UniProtKB"/>
</dbReference>
<dbReference type="GO" id="GO:0005886">
    <property type="term" value="C:plasma membrane"/>
    <property type="evidence" value="ECO:0000314"/>
    <property type="project" value="UniProtKB"/>
</dbReference>
<dbReference type="GO" id="GO:0016028">
    <property type="term" value="C:rhabdomere"/>
    <property type="evidence" value="ECO:0000314"/>
    <property type="project" value="UniProtKB"/>
</dbReference>
<dbReference type="GO" id="GO:0035997">
    <property type="term" value="C:rhabdomere microvillus membrane"/>
    <property type="evidence" value="ECO:0000314"/>
    <property type="project" value="FlyBase"/>
</dbReference>
<dbReference type="GO" id="GO:0005262">
    <property type="term" value="F:calcium channel activity"/>
    <property type="evidence" value="ECO:0000314"/>
    <property type="project" value="FlyBase"/>
</dbReference>
<dbReference type="GO" id="GO:0005516">
    <property type="term" value="F:calmodulin binding"/>
    <property type="evidence" value="ECO:0007669"/>
    <property type="project" value="UniProtKB-KW"/>
</dbReference>
<dbReference type="GO" id="GO:0042802">
    <property type="term" value="F:identical protein binding"/>
    <property type="evidence" value="ECO:0000353"/>
    <property type="project" value="FlyBase"/>
</dbReference>
<dbReference type="GO" id="GO:0070679">
    <property type="term" value="F:inositol 1,4,5 trisphosphate binding"/>
    <property type="evidence" value="ECO:0000318"/>
    <property type="project" value="GO_Central"/>
</dbReference>
<dbReference type="GO" id="GO:0046982">
    <property type="term" value="F:protein heterodimerization activity"/>
    <property type="evidence" value="ECO:0000353"/>
    <property type="project" value="UniProtKB"/>
</dbReference>
<dbReference type="GO" id="GO:0042803">
    <property type="term" value="F:protein homodimerization activity"/>
    <property type="evidence" value="ECO:0000353"/>
    <property type="project" value="UniProtKB"/>
</dbReference>
<dbReference type="GO" id="GO:0015279">
    <property type="term" value="F:store-operated calcium channel activity"/>
    <property type="evidence" value="ECO:0000318"/>
    <property type="project" value="GO_Central"/>
</dbReference>
<dbReference type="GO" id="GO:0070588">
    <property type="term" value="P:calcium ion transmembrane transport"/>
    <property type="evidence" value="ECO:0000314"/>
    <property type="project" value="FlyBase"/>
</dbReference>
<dbReference type="GO" id="GO:0006816">
    <property type="term" value="P:calcium ion transport"/>
    <property type="evidence" value="ECO:0000315"/>
    <property type="project" value="UniProtKB"/>
</dbReference>
<dbReference type="GO" id="GO:0071454">
    <property type="term" value="P:cellular response to anoxia"/>
    <property type="evidence" value="ECO:0000316"/>
    <property type="project" value="FlyBase"/>
</dbReference>
<dbReference type="GO" id="GO:0050962">
    <property type="term" value="P:detection of light stimulus involved in sensory perception"/>
    <property type="evidence" value="ECO:0000315"/>
    <property type="project" value="FlyBase"/>
</dbReference>
<dbReference type="GO" id="GO:0050908">
    <property type="term" value="P:detection of light stimulus involved in visual perception"/>
    <property type="evidence" value="ECO:0000315"/>
    <property type="project" value="UniProtKB"/>
</dbReference>
<dbReference type="GO" id="GO:0098662">
    <property type="term" value="P:inorganic cation transmembrane transport"/>
    <property type="evidence" value="ECO:0000314"/>
    <property type="project" value="FlyBase"/>
</dbReference>
<dbReference type="GO" id="GO:0007005">
    <property type="term" value="P:mitochondrion organization"/>
    <property type="evidence" value="ECO:0000315"/>
    <property type="project" value="FlyBase"/>
</dbReference>
<dbReference type="GO" id="GO:0008355">
    <property type="term" value="P:olfactory learning"/>
    <property type="evidence" value="ECO:0000315"/>
    <property type="project" value="UniProtKB"/>
</dbReference>
<dbReference type="GO" id="GO:0030265">
    <property type="term" value="P:phospholipase C-activating opsin-mediated signaling pathway"/>
    <property type="evidence" value="ECO:0000314"/>
    <property type="project" value="FlyBase"/>
</dbReference>
<dbReference type="GO" id="GO:0007602">
    <property type="term" value="P:phototransduction"/>
    <property type="evidence" value="ECO:0000315"/>
    <property type="project" value="FlyBase"/>
</dbReference>
<dbReference type="GO" id="GO:0007603">
    <property type="term" value="P:phototransduction, visible light"/>
    <property type="evidence" value="ECO:0000315"/>
    <property type="project" value="FlyBase"/>
</dbReference>
<dbReference type="GO" id="GO:0008104">
    <property type="term" value="P:protein localization"/>
    <property type="evidence" value="ECO:0000315"/>
    <property type="project" value="UniProtKB"/>
</dbReference>
<dbReference type="GO" id="GO:0051480">
    <property type="term" value="P:regulation of cytosolic calcium ion concentration"/>
    <property type="evidence" value="ECO:0000318"/>
    <property type="project" value="GO_Central"/>
</dbReference>
<dbReference type="GO" id="GO:0009416">
    <property type="term" value="P:response to light stimulus"/>
    <property type="evidence" value="ECO:0000315"/>
    <property type="project" value="UniProtKB"/>
</dbReference>
<dbReference type="GO" id="GO:0001895">
    <property type="term" value="P:retina homeostasis"/>
    <property type="evidence" value="ECO:0000315"/>
    <property type="project" value="FlyBase"/>
</dbReference>
<dbReference type="GO" id="GO:0007608">
    <property type="term" value="P:sensory perception of smell"/>
    <property type="evidence" value="ECO:0007669"/>
    <property type="project" value="UniProtKB-KW"/>
</dbReference>
<dbReference type="GO" id="GO:0007605">
    <property type="term" value="P:sensory perception of sound"/>
    <property type="evidence" value="ECO:0000315"/>
    <property type="project" value="FlyBase"/>
</dbReference>
<dbReference type="CDD" id="cd23650">
    <property type="entry name" value="TRP_CaM_bind1"/>
    <property type="match status" value="1"/>
</dbReference>
<dbReference type="FunFam" id="1.25.40.20:FF:000402">
    <property type="entry name" value="Transient receptor potential channel"/>
    <property type="match status" value="1"/>
</dbReference>
<dbReference type="Gene3D" id="1.25.40.20">
    <property type="entry name" value="Ankyrin repeat-containing domain"/>
    <property type="match status" value="1"/>
</dbReference>
<dbReference type="InterPro" id="IPR002110">
    <property type="entry name" value="Ankyrin_rpt"/>
</dbReference>
<dbReference type="InterPro" id="IPR036770">
    <property type="entry name" value="Ankyrin_rpt-contain_sf"/>
</dbReference>
<dbReference type="InterPro" id="IPR005821">
    <property type="entry name" value="Ion_trans_dom"/>
</dbReference>
<dbReference type="InterPro" id="IPR013555">
    <property type="entry name" value="TRP_dom"/>
</dbReference>
<dbReference type="InterPro" id="IPR002153">
    <property type="entry name" value="TRPC_channel"/>
</dbReference>
<dbReference type="NCBIfam" id="TIGR00870">
    <property type="entry name" value="trp"/>
    <property type="match status" value="1"/>
</dbReference>
<dbReference type="PANTHER" id="PTHR10117">
    <property type="entry name" value="TRANSIENT RECEPTOR POTENTIAL CHANNEL"/>
    <property type="match status" value="1"/>
</dbReference>
<dbReference type="PANTHER" id="PTHR10117:SF51">
    <property type="entry name" value="TRANSIENT RECEPTOR POTENTIAL PROTEIN"/>
    <property type="match status" value="1"/>
</dbReference>
<dbReference type="Pfam" id="PF00023">
    <property type="entry name" value="Ank"/>
    <property type="match status" value="1"/>
</dbReference>
<dbReference type="Pfam" id="PF12796">
    <property type="entry name" value="Ank_2"/>
    <property type="match status" value="1"/>
</dbReference>
<dbReference type="Pfam" id="PF00520">
    <property type="entry name" value="Ion_trans"/>
    <property type="match status" value="1"/>
</dbReference>
<dbReference type="Pfam" id="PF08344">
    <property type="entry name" value="TRP_2"/>
    <property type="match status" value="1"/>
</dbReference>
<dbReference type="PRINTS" id="PR01097">
    <property type="entry name" value="TRNSRECEPTRP"/>
</dbReference>
<dbReference type="SMART" id="SM00248">
    <property type="entry name" value="ANK"/>
    <property type="match status" value="2"/>
</dbReference>
<dbReference type="SMART" id="SM01420">
    <property type="entry name" value="TRP_2"/>
    <property type="match status" value="1"/>
</dbReference>
<dbReference type="SUPFAM" id="SSF48403">
    <property type="entry name" value="Ankyrin repeat"/>
    <property type="match status" value="1"/>
</dbReference>
<dbReference type="PROSITE" id="PS50297">
    <property type="entry name" value="ANK_REP_REGION"/>
    <property type="match status" value="1"/>
</dbReference>
<dbReference type="PROSITE" id="PS50088">
    <property type="entry name" value="ANK_REPEAT"/>
    <property type="match status" value="1"/>
</dbReference>
<feature type="chain" id="PRO_0000215357" description="Transient receptor potential protein">
    <location>
        <begin position="1"/>
        <end position="1275"/>
    </location>
</feature>
<feature type="topological domain" description="Cytoplasmic" evidence="1">
    <location>
        <begin position="1"/>
        <end position="366"/>
    </location>
</feature>
<feature type="transmembrane region" description="Helical" evidence="1">
    <location>
        <begin position="367"/>
        <end position="387"/>
    </location>
</feature>
<feature type="topological domain" description="Extracellular" evidence="1">
    <location>
        <begin position="388"/>
        <end position="418"/>
    </location>
</feature>
<feature type="transmembrane region" description="Helical" evidence="1">
    <location>
        <begin position="419"/>
        <end position="439"/>
    </location>
</feature>
<feature type="topological domain" description="Cytoplasmic" evidence="1">
    <location>
        <begin position="440"/>
        <end position="450"/>
    </location>
</feature>
<feature type="transmembrane region" description="Helical" evidence="1">
    <location>
        <begin position="451"/>
        <end position="471"/>
    </location>
</feature>
<feature type="topological domain" description="Extracellular" evidence="1">
    <location>
        <begin position="472"/>
        <end position="541"/>
    </location>
</feature>
<feature type="transmembrane region" description="Helical" evidence="1">
    <location>
        <begin position="542"/>
        <end position="562"/>
    </location>
</feature>
<feature type="topological domain" description="Cytoplasmic" evidence="1">
    <location>
        <begin position="563"/>
        <end position="609"/>
    </location>
</feature>
<feature type="transmembrane region" description="Helical" evidence="1">
    <location>
        <begin position="610"/>
        <end position="630"/>
    </location>
</feature>
<feature type="topological domain" description="Extracellular" evidence="1">
    <location>
        <begin position="631"/>
        <end position="637"/>
    </location>
</feature>
<feature type="transmembrane region" description="Helical" evidence="1">
    <location>
        <begin position="638"/>
        <end position="658"/>
    </location>
</feature>
<feature type="topological domain" description="Cytoplasmic" evidence="1">
    <location>
        <begin position="659"/>
        <end position="1275"/>
    </location>
</feature>
<feature type="repeat" description="ANK 1">
    <location>
        <begin position="69"/>
        <end position="98"/>
    </location>
</feature>
<feature type="repeat" description="ANK 2">
    <location>
        <begin position="143"/>
        <end position="172"/>
    </location>
</feature>
<feature type="region of interest" description="Disordered" evidence="2">
    <location>
        <begin position="933"/>
        <end position="1275"/>
    </location>
</feature>
<feature type="compositionally biased region" description="Low complexity" evidence="2">
    <location>
        <begin position="955"/>
        <end position="964"/>
    </location>
</feature>
<feature type="compositionally biased region" description="Low complexity" evidence="2">
    <location>
        <begin position="972"/>
        <end position="982"/>
    </location>
</feature>
<feature type="compositionally biased region" description="Basic and acidic residues" evidence="2">
    <location>
        <begin position="1002"/>
        <end position="1022"/>
    </location>
</feature>
<feature type="compositionally biased region" description="Low complexity" evidence="2">
    <location>
        <begin position="1033"/>
        <end position="1049"/>
    </location>
</feature>
<feature type="compositionally biased region" description="Basic and acidic residues" evidence="2">
    <location>
        <begin position="1080"/>
        <end position="1098"/>
    </location>
</feature>
<feature type="compositionally biased region" description="Low complexity" evidence="2">
    <location>
        <begin position="1099"/>
        <end position="1118"/>
    </location>
</feature>
<feature type="compositionally biased region" description="Basic and acidic residues" evidence="2">
    <location>
        <begin position="1144"/>
        <end position="1239"/>
    </location>
</feature>
<feature type="mutagenesis site" description="In P365; photoreceptors respond normally to light." evidence="4 9">
    <original>P</original>
    <variation>T</variation>
    <location>
        <position position="500"/>
    </location>
</feature>
<feature type="mutagenesis site" description="In P365; photoreceptors respond normally to light." evidence="4 9">
    <original>H</original>
    <variation>N</variation>
    <location>
        <position position="531"/>
    </location>
</feature>
<feature type="mutagenesis site" description="In P365; defective in the response to light due to rapid degeneration of photoreceptors." evidence="4 9">
    <original>F</original>
    <variation>I</variation>
    <location>
        <position position="550"/>
    </location>
</feature>
<feature type="mutagenesis site" description="In P365; photoreceptors respond normally to light." evidence="4 9">
    <original>S</original>
    <variation>F</variation>
    <location>
        <position position="867"/>
    </location>
</feature>
<feature type="mutagenesis site" description="Does not disrupt inaD binding." evidence="8">
    <original>V</original>
    <variation>D</variation>
    <location>
        <position position="1266"/>
    </location>
</feature>
<feature type="sequence conflict" description="In Ref. 1 and 2." evidence="15" ref="1 2">
    <original>M</original>
    <variation>T</variation>
    <location>
        <position position="188"/>
    </location>
</feature>
<feature type="sequence conflict" description="In Ref. 1; AAA28976." evidence="15" ref="1">
    <original>A</original>
    <variation>V</variation>
    <location>
        <position position="222"/>
    </location>
</feature>
<feature type="sequence conflict" description="In Ref. 5; AAQ22416." evidence="15" ref="5">
    <original>S</original>
    <variation>T</variation>
    <location>
        <position position="237"/>
    </location>
</feature>
<feature type="sequence conflict" description="In Ref. 5; AAQ22416." evidence="15" ref="5">
    <original>A</original>
    <variation>T</variation>
    <location>
        <position position="261"/>
    </location>
</feature>
<feature type="sequence conflict" description="In Ref. 2; AAA56928." evidence="15" ref="2">
    <original>GQRQ</original>
    <variation>ASSE</variation>
    <location>
        <begin position="285"/>
        <end position="288"/>
    </location>
</feature>
<feature type="sequence conflict" description="In Ref. 2; AAA56928." evidence="15" ref="2">
    <original>RRKQ</original>
    <variation>PQE</variation>
    <location>
        <begin position="326"/>
        <end position="329"/>
    </location>
</feature>
<feature type="sequence conflict" description="In Ref. 2; AAA56928." evidence="15" ref="2">
    <original>KPFVKFITHS</original>
    <variation>NPLSSSSRTP</variation>
    <location>
        <begin position="365"/>
        <end position="374"/>
    </location>
</feature>
<feature type="sequence conflict" description="In Ref. 1; AAA28976." evidence="15" ref="1">
    <original>N</original>
    <variation>S</variation>
    <location>
        <position position="785"/>
    </location>
</feature>
<feature type="sequence conflict" description="In Ref. 1 and 2." evidence="15" ref="1 2">
    <original>A</original>
    <variation>P</variation>
    <location>
        <position position="1008"/>
    </location>
</feature>
<feature type="sequence conflict" description="In Ref. 5." evidence="15" ref="5">
    <original>K</original>
    <variation>R</variation>
    <location>
        <position position="1197"/>
    </location>
</feature>
<feature type="helix" evidence="22">
    <location>
        <begin position="802"/>
        <end position="813"/>
    </location>
</feature>
<feature type="helix" evidence="22">
    <location>
        <begin position="817"/>
        <end position="826"/>
    </location>
</feature>
<feature type="helix" evidence="22">
    <location>
        <begin position="836"/>
        <end position="844"/>
    </location>
</feature>
<feature type="helix" evidence="21">
    <location>
        <begin position="917"/>
        <end position="925"/>
    </location>
</feature>
<feature type="helix" evidence="21">
    <location>
        <begin position="927"/>
        <end position="935"/>
    </location>
</feature>
<feature type="strand" evidence="20">
    <location>
        <begin position="1262"/>
        <end position="1264"/>
    </location>
</feature>
<feature type="turn" evidence="20">
    <location>
        <begin position="1265"/>
        <end position="1267"/>
    </location>
</feature>
<name>TRP_DROME</name>
<protein>
    <recommendedName>
        <fullName>Transient receptor potential protein</fullName>
    </recommendedName>
</protein>
<evidence type="ECO:0000255" key="1"/>
<evidence type="ECO:0000256" key="2">
    <source>
        <dbReference type="SAM" id="MobiDB-lite"/>
    </source>
</evidence>
<evidence type="ECO:0000269" key="3">
    <source>
    </source>
</evidence>
<evidence type="ECO:0000269" key="4">
    <source>
    </source>
</evidence>
<evidence type="ECO:0000269" key="5">
    <source>
    </source>
</evidence>
<evidence type="ECO:0000269" key="6">
    <source>
    </source>
</evidence>
<evidence type="ECO:0000269" key="7">
    <source>
    </source>
</evidence>
<evidence type="ECO:0000269" key="8">
    <source>
    </source>
</evidence>
<evidence type="ECO:0000269" key="9">
    <source>
    </source>
</evidence>
<evidence type="ECO:0000269" key="10">
    <source>
    </source>
</evidence>
<evidence type="ECO:0000269" key="11">
    <source>
    </source>
</evidence>
<evidence type="ECO:0000269" key="12">
    <source>
    </source>
</evidence>
<evidence type="ECO:0000269" key="13">
    <source>
    </source>
</evidence>
<evidence type="ECO:0000269" key="14">
    <source>
    </source>
</evidence>
<evidence type="ECO:0000305" key="15"/>
<evidence type="ECO:0000305" key="16">
    <source>
    </source>
</evidence>
<evidence type="ECO:0000305" key="17">
    <source>
    </source>
</evidence>
<evidence type="ECO:0000305" key="18">
    <source>
    </source>
</evidence>
<evidence type="ECO:0000305" key="19">
    <source>
    </source>
</evidence>
<evidence type="ECO:0007829" key="20">
    <source>
        <dbReference type="PDB" id="5F67"/>
    </source>
</evidence>
<evidence type="ECO:0007829" key="21">
    <source>
        <dbReference type="PDB" id="7CQH"/>
    </source>
</evidence>
<evidence type="ECO:0007829" key="22">
    <source>
        <dbReference type="PDB" id="7CQV"/>
    </source>
</evidence>
<accession>P19334</accession>
<accession>Q7YU76</accession>
<accession>Q9VAE1</accession>